<dbReference type="EMBL" id="BX571874">
    <property type="protein sequence ID" value="CAE16869.1"/>
    <property type="molecule type" value="Genomic_DNA"/>
</dbReference>
<dbReference type="RefSeq" id="WP_011148577.1">
    <property type="nucleotide sequence ID" value="NC_005126.1"/>
</dbReference>
<dbReference type="SMR" id="Q7MZ14"/>
<dbReference type="STRING" id="243265.plu4497"/>
<dbReference type="GeneID" id="48850705"/>
<dbReference type="KEGG" id="plu:plu4497"/>
<dbReference type="eggNOG" id="COG1781">
    <property type="taxonomic scope" value="Bacteria"/>
</dbReference>
<dbReference type="HOGENOM" id="CLU_128576_0_0_6"/>
<dbReference type="OrthoDB" id="5599321at2"/>
<dbReference type="Proteomes" id="UP000002514">
    <property type="component" value="Chromosome"/>
</dbReference>
<dbReference type="GO" id="GO:0009347">
    <property type="term" value="C:aspartate carbamoyltransferase complex"/>
    <property type="evidence" value="ECO:0007669"/>
    <property type="project" value="InterPro"/>
</dbReference>
<dbReference type="GO" id="GO:0046872">
    <property type="term" value="F:metal ion binding"/>
    <property type="evidence" value="ECO:0007669"/>
    <property type="project" value="UniProtKB-KW"/>
</dbReference>
<dbReference type="GO" id="GO:0006207">
    <property type="term" value="P:'de novo' pyrimidine nucleobase biosynthetic process"/>
    <property type="evidence" value="ECO:0007669"/>
    <property type="project" value="InterPro"/>
</dbReference>
<dbReference type="GO" id="GO:0006221">
    <property type="term" value="P:pyrimidine nucleotide biosynthetic process"/>
    <property type="evidence" value="ECO:0007669"/>
    <property type="project" value="UniProtKB-UniRule"/>
</dbReference>
<dbReference type="FunFam" id="3.30.70.140:FF:000001">
    <property type="entry name" value="Aspartate carbamoyltransferase regulatory chain"/>
    <property type="match status" value="1"/>
</dbReference>
<dbReference type="Gene3D" id="2.30.30.20">
    <property type="entry name" value="Aspartate carbamoyltransferase regulatory subunit, C-terminal domain"/>
    <property type="match status" value="1"/>
</dbReference>
<dbReference type="Gene3D" id="3.30.70.140">
    <property type="entry name" value="Aspartate carbamoyltransferase regulatory subunit, N-terminal domain"/>
    <property type="match status" value="1"/>
</dbReference>
<dbReference type="HAMAP" id="MF_00002">
    <property type="entry name" value="Asp_carb_tr_reg"/>
    <property type="match status" value="1"/>
</dbReference>
<dbReference type="InterPro" id="IPR020545">
    <property type="entry name" value="Asp_carbamoyltransf_reg_N"/>
</dbReference>
<dbReference type="InterPro" id="IPR002801">
    <property type="entry name" value="Asp_carbamoylTrfase_reg"/>
</dbReference>
<dbReference type="InterPro" id="IPR020542">
    <property type="entry name" value="Asp_carbamoyltrfase_reg_C"/>
</dbReference>
<dbReference type="InterPro" id="IPR036792">
    <property type="entry name" value="Asp_carbatrfase_reg_C_sf"/>
</dbReference>
<dbReference type="InterPro" id="IPR036793">
    <property type="entry name" value="Asp_carbatrfase_reg_N_sf"/>
</dbReference>
<dbReference type="NCBIfam" id="TIGR00240">
    <property type="entry name" value="ATCase_reg"/>
    <property type="match status" value="1"/>
</dbReference>
<dbReference type="PANTHER" id="PTHR35805">
    <property type="entry name" value="ASPARTATE CARBAMOYLTRANSFERASE REGULATORY CHAIN"/>
    <property type="match status" value="1"/>
</dbReference>
<dbReference type="PANTHER" id="PTHR35805:SF1">
    <property type="entry name" value="ASPARTATE CARBAMOYLTRANSFERASE REGULATORY CHAIN"/>
    <property type="match status" value="1"/>
</dbReference>
<dbReference type="Pfam" id="PF01948">
    <property type="entry name" value="PyrI"/>
    <property type="match status" value="1"/>
</dbReference>
<dbReference type="Pfam" id="PF02748">
    <property type="entry name" value="PyrI_C"/>
    <property type="match status" value="1"/>
</dbReference>
<dbReference type="SUPFAM" id="SSF57825">
    <property type="entry name" value="Aspartate carbamoyltransferase, Regulatory-chain, C-terminal domain"/>
    <property type="match status" value="1"/>
</dbReference>
<dbReference type="SUPFAM" id="SSF54893">
    <property type="entry name" value="Aspartate carbamoyltransferase, Regulatory-chain, N-terminal domain"/>
    <property type="match status" value="1"/>
</dbReference>
<reference key="1">
    <citation type="journal article" date="2003" name="Nat. Biotechnol.">
        <title>The genome sequence of the entomopathogenic bacterium Photorhabdus luminescens.</title>
        <authorList>
            <person name="Duchaud E."/>
            <person name="Rusniok C."/>
            <person name="Frangeul L."/>
            <person name="Buchrieser C."/>
            <person name="Givaudan A."/>
            <person name="Taourit S."/>
            <person name="Bocs S."/>
            <person name="Boursaux-Eude C."/>
            <person name="Chandler M."/>
            <person name="Charles J.-F."/>
            <person name="Dassa E."/>
            <person name="Derose R."/>
            <person name="Derzelle S."/>
            <person name="Freyssinet G."/>
            <person name="Gaudriault S."/>
            <person name="Medigue C."/>
            <person name="Lanois A."/>
            <person name="Powell K."/>
            <person name="Siguier P."/>
            <person name="Vincent R."/>
            <person name="Wingate V."/>
            <person name="Zouine M."/>
            <person name="Glaser P."/>
            <person name="Boemare N."/>
            <person name="Danchin A."/>
            <person name="Kunst F."/>
        </authorList>
    </citation>
    <scope>NUCLEOTIDE SEQUENCE [LARGE SCALE GENOMIC DNA]</scope>
    <source>
        <strain>DSM 15139 / CIP 105565 / TT01</strain>
    </source>
</reference>
<gene>
    <name evidence="1" type="primary">pyrI</name>
    <name type="ordered locus">plu4497</name>
</gene>
<comment type="function">
    <text evidence="1">Involved in allosteric regulation of aspartate carbamoyltransferase.</text>
</comment>
<comment type="cofactor">
    <cofactor evidence="1">
        <name>Zn(2+)</name>
        <dbReference type="ChEBI" id="CHEBI:29105"/>
    </cofactor>
    <text evidence="1">Binds 1 zinc ion per subunit.</text>
</comment>
<comment type="subunit">
    <text evidence="1">Contains catalytic and regulatory chains.</text>
</comment>
<comment type="similarity">
    <text evidence="1">Belongs to the PyrI family.</text>
</comment>
<name>PYRI_PHOLL</name>
<feature type="chain" id="PRO_0000142309" description="Aspartate carbamoyltransferase regulatory chain">
    <location>
        <begin position="1"/>
        <end position="154"/>
    </location>
</feature>
<feature type="binding site" evidence="1">
    <location>
        <position position="109"/>
    </location>
    <ligand>
        <name>Zn(2+)</name>
        <dbReference type="ChEBI" id="CHEBI:29105"/>
    </ligand>
</feature>
<feature type="binding site" evidence="1">
    <location>
        <position position="114"/>
    </location>
    <ligand>
        <name>Zn(2+)</name>
        <dbReference type="ChEBI" id="CHEBI:29105"/>
    </ligand>
</feature>
<feature type="binding site" evidence="1">
    <location>
        <position position="138"/>
    </location>
    <ligand>
        <name>Zn(2+)</name>
        <dbReference type="ChEBI" id="CHEBI:29105"/>
    </ligand>
</feature>
<feature type="binding site" evidence="1">
    <location>
        <position position="141"/>
    </location>
    <ligand>
        <name>Zn(2+)</name>
        <dbReference type="ChEBI" id="CHEBI:29105"/>
    </ligand>
</feature>
<protein>
    <recommendedName>
        <fullName evidence="1">Aspartate carbamoyltransferase regulatory chain</fullName>
    </recommendedName>
</protein>
<evidence type="ECO:0000255" key="1">
    <source>
        <dbReference type="HAMAP-Rule" id="MF_00002"/>
    </source>
</evidence>
<sequence>MTQDHKLQVEAIRCGTVIDHIPAQVGFKLLSLFKLTETDQRITIGLNLPSNRLGKKDLIKIENTFLTEQQANQLAMYAPNATVNCIENYEVVKKLPINLPKCIDNVLVCPNSNCISHNEPVESSFRVKVTVEDVVLTCKYCEKEFDRNVVILND</sequence>
<proteinExistence type="inferred from homology"/>
<organism>
    <name type="scientific">Photorhabdus laumondii subsp. laumondii (strain DSM 15139 / CIP 105565 / TT01)</name>
    <name type="common">Photorhabdus luminescens subsp. laumondii</name>
    <dbReference type="NCBI Taxonomy" id="243265"/>
    <lineage>
        <taxon>Bacteria</taxon>
        <taxon>Pseudomonadati</taxon>
        <taxon>Pseudomonadota</taxon>
        <taxon>Gammaproteobacteria</taxon>
        <taxon>Enterobacterales</taxon>
        <taxon>Morganellaceae</taxon>
        <taxon>Photorhabdus</taxon>
    </lineage>
</organism>
<keyword id="KW-0479">Metal-binding</keyword>
<keyword id="KW-0665">Pyrimidine biosynthesis</keyword>
<keyword id="KW-1185">Reference proteome</keyword>
<keyword id="KW-0862">Zinc</keyword>
<accession>Q7MZ14</accession>